<evidence type="ECO:0000255" key="1">
    <source>
        <dbReference type="HAMAP-Rule" id="MF_00073"/>
    </source>
</evidence>
<keyword id="KW-1185">Reference proteome</keyword>
<keyword id="KW-0694">RNA-binding</keyword>
<keyword id="KW-0804">Transcription</keyword>
<keyword id="KW-0889">Transcription antitermination</keyword>
<keyword id="KW-0805">Transcription regulation</keyword>
<gene>
    <name evidence="1" type="primary">nusB</name>
    <name type="ordered locus">VF_0704</name>
</gene>
<organism>
    <name type="scientific">Aliivibrio fischeri (strain ATCC 700601 / ES114)</name>
    <name type="common">Vibrio fischeri</name>
    <dbReference type="NCBI Taxonomy" id="312309"/>
    <lineage>
        <taxon>Bacteria</taxon>
        <taxon>Pseudomonadati</taxon>
        <taxon>Pseudomonadota</taxon>
        <taxon>Gammaproteobacteria</taxon>
        <taxon>Vibrionales</taxon>
        <taxon>Vibrionaceae</taxon>
        <taxon>Aliivibrio</taxon>
    </lineage>
</organism>
<comment type="function">
    <text evidence="1">Involved in transcription antitermination. Required for transcription of ribosomal RNA (rRNA) genes. Binds specifically to the boxA antiterminator sequence of the ribosomal RNA (rrn) operons.</text>
</comment>
<comment type="similarity">
    <text evidence="1">Belongs to the NusB family.</text>
</comment>
<protein>
    <recommendedName>
        <fullName evidence="1">Transcription antitermination protein NusB</fullName>
    </recommendedName>
    <alternativeName>
        <fullName evidence="1">Antitermination factor NusB</fullName>
    </alternativeName>
</protein>
<sequence length="155" mass="17843">MGVSVKPAARRNARQFALQAIYSWQLSKENVADIEEQFLTAEKYDEEEHHANEPKLQTPETDVAYFRDLFSGVALNHMKLDGKMRPYLSRPLQDLDQMELALLRMSIYEMMNRDDVPYKVVINEAIELAKVFAAEDSHKFVNGVLDKAAPTLRKK</sequence>
<dbReference type="EMBL" id="CP000020">
    <property type="protein sequence ID" value="AAW85199.1"/>
    <property type="molecule type" value="Genomic_DNA"/>
</dbReference>
<dbReference type="RefSeq" id="WP_005418093.1">
    <property type="nucleotide sequence ID" value="NZ_CAWLES010000001.1"/>
</dbReference>
<dbReference type="RefSeq" id="YP_204087.1">
    <property type="nucleotide sequence ID" value="NC_006840.2"/>
</dbReference>
<dbReference type="SMR" id="Q5E6Z7"/>
<dbReference type="STRING" id="312309.VF_0704"/>
<dbReference type="EnsemblBacteria" id="AAW85199">
    <property type="protein sequence ID" value="AAW85199"/>
    <property type="gene ID" value="VF_0704"/>
</dbReference>
<dbReference type="GeneID" id="54163359"/>
<dbReference type="KEGG" id="vfi:VF_0704"/>
<dbReference type="PATRIC" id="fig|312309.11.peg.698"/>
<dbReference type="eggNOG" id="COG0781">
    <property type="taxonomic scope" value="Bacteria"/>
</dbReference>
<dbReference type="HOGENOM" id="CLU_087843_4_1_6"/>
<dbReference type="OrthoDB" id="9789556at2"/>
<dbReference type="Proteomes" id="UP000000537">
    <property type="component" value="Chromosome I"/>
</dbReference>
<dbReference type="GO" id="GO:0005829">
    <property type="term" value="C:cytosol"/>
    <property type="evidence" value="ECO:0007669"/>
    <property type="project" value="TreeGrafter"/>
</dbReference>
<dbReference type="GO" id="GO:0003723">
    <property type="term" value="F:RNA binding"/>
    <property type="evidence" value="ECO:0007669"/>
    <property type="project" value="UniProtKB-UniRule"/>
</dbReference>
<dbReference type="GO" id="GO:0006353">
    <property type="term" value="P:DNA-templated transcription termination"/>
    <property type="evidence" value="ECO:0007669"/>
    <property type="project" value="UniProtKB-UniRule"/>
</dbReference>
<dbReference type="GO" id="GO:0031564">
    <property type="term" value="P:transcription antitermination"/>
    <property type="evidence" value="ECO:0007669"/>
    <property type="project" value="UniProtKB-KW"/>
</dbReference>
<dbReference type="FunFam" id="1.10.940.10:FF:000001">
    <property type="entry name" value="Transcription antitermination factor NusB"/>
    <property type="match status" value="1"/>
</dbReference>
<dbReference type="Gene3D" id="1.10.940.10">
    <property type="entry name" value="NusB-like"/>
    <property type="match status" value="1"/>
</dbReference>
<dbReference type="HAMAP" id="MF_00073">
    <property type="entry name" value="NusB"/>
    <property type="match status" value="1"/>
</dbReference>
<dbReference type="InterPro" id="IPR035926">
    <property type="entry name" value="NusB-like_sf"/>
</dbReference>
<dbReference type="InterPro" id="IPR011605">
    <property type="entry name" value="NusB_fam"/>
</dbReference>
<dbReference type="InterPro" id="IPR006027">
    <property type="entry name" value="NusB_RsmB_TIM44"/>
</dbReference>
<dbReference type="NCBIfam" id="TIGR01951">
    <property type="entry name" value="nusB"/>
    <property type="match status" value="1"/>
</dbReference>
<dbReference type="PANTHER" id="PTHR11078:SF3">
    <property type="entry name" value="ANTITERMINATION NUSB DOMAIN-CONTAINING PROTEIN"/>
    <property type="match status" value="1"/>
</dbReference>
<dbReference type="PANTHER" id="PTHR11078">
    <property type="entry name" value="N UTILIZATION SUBSTANCE PROTEIN B-RELATED"/>
    <property type="match status" value="1"/>
</dbReference>
<dbReference type="Pfam" id="PF01029">
    <property type="entry name" value="NusB"/>
    <property type="match status" value="1"/>
</dbReference>
<dbReference type="SUPFAM" id="SSF48013">
    <property type="entry name" value="NusB-like"/>
    <property type="match status" value="1"/>
</dbReference>
<name>NUSB_ALIF1</name>
<feature type="chain" id="PRO_0000265624" description="Transcription antitermination protein NusB">
    <location>
        <begin position="1"/>
        <end position="155"/>
    </location>
</feature>
<accession>Q5E6Z7</accession>
<proteinExistence type="inferred from homology"/>
<reference key="1">
    <citation type="journal article" date="2005" name="Proc. Natl. Acad. Sci. U.S.A.">
        <title>Complete genome sequence of Vibrio fischeri: a symbiotic bacterium with pathogenic congeners.</title>
        <authorList>
            <person name="Ruby E.G."/>
            <person name="Urbanowski M."/>
            <person name="Campbell J."/>
            <person name="Dunn A."/>
            <person name="Faini M."/>
            <person name="Gunsalus R."/>
            <person name="Lostroh P."/>
            <person name="Lupp C."/>
            <person name="McCann J."/>
            <person name="Millikan D."/>
            <person name="Schaefer A."/>
            <person name="Stabb E."/>
            <person name="Stevens A."/>
            <person name="Visick K."/>
            <person name="Whistler C."/>
            <person name="Greenberg E.P."/>
        </authorList>
    </citation>
    <scope>NUCLEOTIDE SEQUENCE [LARGE SCALE GENOMIC DNA]</scope>
    <source>
        <strain>ATCC 700601 / ES114</strain>
    </source>
</reference>